<proteinExistence type="inferred from homology"/>
<evidence type="ECO:0000250" key="1"/>
<evidence type="ECO:0000305" key="2"/>
<sequence length="153" mass="16909">MIKVGICDTTFARYDMGGAAIDELKKHTAGIKIIRRTVPGIKDLPVACKKLIEEEGCEMVMALGMPGPEEKDKVCAHEASTGLIQAQLMTNTHILEVFVHEDEEDDPEELKVLADNRAREHAQNLIMMLFKPDRLTREAGMGLREGKPDAGPL</sequence>
<feature type="chain" id="PRO_0000134861" description="Riboflavin synthase">
    <location>
        <begin position="1"/>
        <end position="153"/>
    </location>
</feature>
<organism>
    <name type="scientific">Methanothermobacter thermautotrophicus (strain ATCC 29096 / DSM 1053 / JCM 10044 / NBRC 100330 / Delta H)</name>
    <name type="common">Methanobacterium thermoautotrophicum</name>
    <dbReference type="NCBI Taxonomy" id="187420"/>
    <lineage>
        <taxon>Archaea</taxon>
        <taxon>Methanobacteriati</taxon>
        <taxon>Methanobacteriota</taxon>
        <taxon>Methanomada group</taxon>
        <taxon>Methanobacteria</taxon>
        <taxon>Methanobacteriales</taxon>
        <taxon>Methanobacteriaceae</taxon>
        <taxon>Methanothermobacter</taxon>
    </lineage>
</organism>
<gene>
    <name type="primary">ribC</name>
    <name type="ordered locus">MTH_134</name>
</gene>
<name>RISC_METTH</name>
<reference key="1">
    <citation type="journal article" date="1997" name="J. Bacteriol.">
        <title>Complete genome sequence of Methanobacterium thermoautotrophicum deltaH: functional analysis and comparative genomics.</title>
        <authorList>
            <person name="Smith D.R."/>
            <person name="Doucette-Stamm L.A."/>
            <person name="Deloughery C."/>
            <person name="Lee H.-M."/>
            <person name="Dubois J."/>
            <person name="Aldredge T."/>
            <person name="Bashirzadeh R."/>
            <person name="Blakely D."/>
            <person name="Cook R."/>
            <person name="Gilbert K."/>
            <person name="Harrison D."/>
            <person name="Hoang L."/>
            <person name="Keagle P."/>
            <person name="Lumm W."/>
            <person name="Pothier B."/>
            <person name="Qiu D."/>
            <person name="Spadafora R."/>
            <person name="Vicare R."/>
            <person name="Wang Y."/>
            <person name="Wierzbowski J."/>
            <person name="Gibson R."/>
            <person name="Jiwani N."/>
            <person name="Caruso A."/>
            <person name="Bush D."/>
            <person name="Safer H."/>
            <person name="Patwell D."/>
            <person name="Prabhakar S."/>
            <person name="McDougall S."/>
            <person name="Shimer G."/>
            <person name="Goyal A."/>
            <person name="Pietrovski S."/>
            <person name="Church G.M."/>
            <person name="Daniels C.J."/>
            <person name="Mao J.-I."/>
            <person name="Rice P."/>
            <person name="Noelling J."/>
            <person name="Reeve J.N."/>
        </authorList>
    </citation>
    <scope>NUCLEOTIDE SEQUENCE [LARGE SCALE GENOMIC DNA]</scope>
    <source>
        <strain>ATCC 29096 / DSM 1053 / JCM 10044 / NBRC 100330 / Delta H</strain>
    </source>
</reference>
<accession>O26237</accession>
<protein>
    <recommendedName>
        <fullName>Riboflavin synthase</fullName>
        <ecNumber>2.5.1.9</ecNumber>
    </recommendedName>
</protein>
<keyword id="KW-0460">Magnesium</keyword>
<keyword id="KW-1185">Reference proteome</keyword>
<keyword id="KW-0686">Riboflavin biosynthesis</keyword>
<keyword id="KW-0808">Transferase</keyword>
<comment type="catalytic activity">
    <reaction>
        <text>2 6,7-dimethyl-8-(1-D-ribityl)lumazine + H(+) = 5-amino-6-(D-ribitylamino)uracil + riboflavin</text>
        <dbReference type="Rhea" id="RHEA:20772"/>
        <dbReference type="ChEBI" id="CHEBI:15378"/>
        <dbReference type="ChEBI" id="CHEBI:15934"/>
        <dbReference type="ChEBI" id="CHEBI:57986"/>
        <dbReference type="ChEBI" id="CHEBI:58201"/>
        <dbReference type="EC" id="2.5.1.9"/>
    </reaction>
</comment>
<comment type="cofactor">
    <cofactor evidence="1">
        <name>Mg(2+)</name>
        <dbReference type="ChEBI" id="CHEBI:18420"/>
    </cofactor>
</comment>
<comment type="activity regulation">
    <text evidence="1">Inhibited by EDTA.</text>
</comment>
<comment type="pathway">
    <text>Cofactor biosynthesis; riboflavin biosynthesis; riboflavin from 2-hydroxy-3-oxobutyl phosphate and 5-amino-6-(D-ribitylamino)uracil: step 2/2.</text>
</comment>
<comment type="subunit">
    <text evidence="1">Homooligomer.</text>
</comment>
<comment type="similarity">
    <text evidence="2">Belongs to the DMRL synthase family.</text>
</comment>
<dbReference type="EC" id="2.5.1.9"/>
<dbReference type="EMBL" id="AE000666">
    <property type="protein sequence ID" value="AAB84640.1"/>
    <property type="molecule type" value="Genomic_DNA"/>
</dbReference>
<dbReference type="PIR" id="B69045">
    <property type="entry name" value="B69045"/>
</dbReference>
<dbReference type="SMR" id="O26237"/>
<dbReference type="FunCoup" id="O26237">
    <property type="interactions" value="95"/>
</dbReference>
<dbReference type="STRING" id="187420.MTH_134"/>
<dbReference type="PaxDb" id="187420-MTH_134"/>
<dbReference type="EnsemblBacteria" id="AAB84640">
    <property type="protein sequence ID" value="AAB84640"/>
    <property type="gene ID" value="MTH_134"/>
</dbReference>
<dbReference type="KEGG" id="mth:MTH_134"/>
<dbReference type="PATRIC" id="fig|187420.15.peg.107"/>
<dbReference type="HOGENOM" id="CLU_1682776_0_0_2"/>
<dbReference type="InParanoid" id="O26237"/>
<dbReference type="UniPathway" id="UPA00275">
    <property type="reaction ID" value="UER00405"/>
</dbReference>
<dbReference type="Proteomes" id="UP000005223">
    <property type="component" value="Chromosome"/>
</dbReference>
<dbReference type="GO" id="GO:0009349">
    <property type="term" value="C:riboflavin synthase complex"/>
    <property type="evidence" value="ECO:0007669"/>
    <property type="project" value="InterPro"/>
</dbReference>
<dbReference type="GO" id="GO:0004746">
    <property type="term" value="F:riboflavin synthase activity"/>
    <property type="evidence" value="ECO:0007669"/>
    <property type="project" value="UniProtKB-EC"/>
</dbReference>
<dbReference type="GO" id="GO:0009231">
    <property type="term" value="P:riboflavin biosynthetic process"/>
    <property type="evidence" value="ECO:0007669"/>
    <property type="project" value="UniProtKB-UniPathway"/>
</dbReference>
<dbReference type="CDD" id="cd09210">
    <property type="entry name" value="Riboflavin_synthase_archaeal"/>
    <property type="match status" value="1"/>
</dbReference>
<dbReference type="Gene3D" id="3.40.50.960">
    <property type="entry name" value="Lumazine/riboflavin synthase"/>
    <property type="match status" value="1"/>
</dbReference>
<dbReference type="InterPro" id="IPR002180">
    <property type="entry name" value="LS/RS"/>
</dbReference>
<dbReference type="InterPro" id="IPR036467">
    <property type="entry name" value="LS/RS_sf"/>
</dbReference>
<dbReference type="InterPro" id="IPR006399">
    <property type="entry name" value="Ribfl_synth_arc"/>
</dbReference>
<dbReference type="NCBIfam" id="TIGR01506">
    <property type="entry name" value="ribC_arch"/>
    <property type="match status" value="1"/>
</dbReference>
<dbReference type="Pfam" id="PF00885">
    <property type="entry name" value="DMRL_synthase"/>
    <property type="match status" value="1"/>
</dbReference>
<dbReference type="PIRSF" id="PIRSF015750">
    <property type="entry name" value="Ribfl_synth_arc"/>
    <property type="match status" value="1"/>
</dbReference>
<dbReference type="SUPFAM" id="SSF52121">
    <property type="entry name" value="Lumazine synthase"/>
    <property type="match status" value="1"/>
</dbReference>